<feature type="chain" id="PRO_0000378266" description="Putative cysteine ligase BshC">
    <location>
        <begin position="1"/>
        <end position="537"/>
    </location>
</feature>
<feature type="coiled-coil region" evidence="1">
    <location>
        <begin position="417"/>
        <end position="457"/>
    </location>
</feature>
<comment type="function">
    <text evidence="1">Involved in bacillithiol (BSH) biosynthesis. May catalyze the last step of the pathway, the addition of cysteine to glucosamine malate (GlcN-Mal) to generate BSH.</text>
</comment>
<comment type="similarity">
    <text evidence="1">Belongs to the BshC family.</text>
</comment>
<proteinExistence type="inferred from homology"/>
<sequence length="537" mass="62744">MDCLIANINENDQFLERLKESESLLNTFYQYDAMSPESFEQALNAPNNGREQELASVISNYMSDLELTEAQQINIDKLKKGAKVVIGGQQAGLFGGPLYTFHKILSIVNLSRQLNEEYNKEVVPVFWIAGEDHDFDEVNHTYVFNTEKAKLHKVKYHTMTPPESNVSRFIPDKDKMLEALDDFLVQIPETAHTNHLRNEVQHIIKNYASWSDMFKALLHIVFKEYGVLLIDAQDPKLRHLEKPILKEMLKKHDEVDRAFRQRQAETVEAGLAEMIQTDTNVHLFLHEDDMRQLLTYEDGHYYTSKSQTAYTLDELLEIVENTPERFSNNVVTRPIMEEWLFNTVSFIGGPSEIKYWAELKAAFDVLDVTMPIVLPRMKITYITKRIEKLLKRYDINAEHVIADGIDNDKNKFIRAHASEQFLNELDQLEAQQKETYERLAAEVQGNEDNKNLVEKNNQIHQSQYDYLRKRYFINIERENAISMKHFRELNETLHPMGGLQERVWNALQFMNEFGTDMFSPSIYPPLRYTLKQIIIKP</sequence>
<protein>
    <recommendedName>
        <fullName evidence="1">Putative cysteine ligase BshC</fullName>
        <ecNumber evidence="1">6.-.-.-</ecNumber>
    </recommendedName>
</protein>
<keyword id="KW-0175">Coiled coil</keyword>
<keyword id="KW-0436">Ligase</keyword>
<keyword id="KW-1185">Reference proteome</keyword>
<gene>
    <name evidence="1" type="primary">bshC</name>
    <name type="ordered locus">Sca_0790</name>
</gene>
<dbReference type="EC" id="6.-.-.-" evidence="1"/>
<dbReference type="EMBL" id="AM295250">
    <property type="protein sequence ID" value="CAL27700.1"/>
    <property type="molecule type" value="Genomic_DNA"/>
</dbReference>
<dbReference type="RefSeq" id="WP_015900042.1">
    <property type="nucleotide sequence ID" value="NC_012121.1"/>
</dbReference>
<dbReference type="SMR" id="B9DPQ7"/>
<dbReference type="GeneID" id="93795726"/>
<dbReference type="KEGG" id="sca:SCA_0790"/>
<dbReference type="eggNOG" id="COG4365">
    <property type="taxonomic scope" value="Bacteria"/>
</dbReference>
<dbReference type="HOGENOM" id="CLU_022249_1_0_9"/>
<dbReference type="OrthoDB" id="9765151at2"/>
<dbReference type="BioCyc" id="SCAR396513:SCA_RS04005-MONOMER"/>
<dbReference type="Proteomes" id="UP000000444">
    <property type="component" value="Chromosome"/>
</dbReference>
<dbReference type="GO" id="GO:0016874">
    <property type="term" value="F:ligase activity"/>
    <property type="evidence" value="ECO:0007669"/>
    <property type="project" value="UniProtKB-UniRule"/>
</dbReference>
<dbReference type="HAMAP" id="MF_01867">
    <property type="entry name" value="BshC"/>
    <property type="match status" value="1"/>
</dbReference>
<dbReference type="InterPro" id="IPR011199">
    <property type="entry name" value="Bacillithiol_biosynth_BshC"/>
</dbReference>
<dbReference type="InterPro" id="IPR055399">
    <property type="entry name" value="CC_BshC"/>
</dbReference>
<dbReference type="InterPro" id="IPR055398">
    <property type="entry name" value="Rossmann-like_BshC"/>
</dbReference>
<dbReference type="NCBIfam" id="TIGR03998">
    <property type="entry name" value="thiol_BshC"/>
    <property type="match status" value="1"/>
</dbReference>
<dbReference type="Pfam" id="PF24850">
    <property type="entry name" value="CC_BshC"/>
    <property type="match status" value="1"/>
</dbReference>
<dbReference type="Pfam" id="PF10079">
    <property type="entry name" value="Rossmann-like_BshC"/>
    <property type="match status" value="1"/>
</dbReference>
<dbReference type="PIRSF" id="PIRSF012535">
    <property type="entry name" value="UCP012535"/>
    <property type="match status" value="1"/>
</dbReference>
<accession>B9DPQ7</accession>
<reference key="1">
    <citation type="journal article" date="2009" name="Appl. Environ. Microbiol.">
        <title>Genome analysis of the meat starter culture bacterium Staphylococcus carnosus TM300.</title>
        <authorList>
            <person name="Rosenstein R."/>
            <person name="Nerz C."/>
            <person name="Biswas L."/>
            <person name="Resch A."/>
            <person name="Raddatz G."/>
            <person name="Schuster S.C."/>
            <person name="Goetz F."/>
        </authorList>
    </citation>
    <scope>NUCLEOTIDE SEQUENCE [LARGE SCALE GENOMIC DNA]</scope>
    <source>
        <strain>TM300</strain>
    </source>
</reference>
<organism>
    <name type="scientific">Staphylococcus carnosus (strain TM300)</name>
    <dbReference type="NCBI Taxonomy" id="396513"/>
    <lineage>
        <taxon>Bacteria</taxon>
        <taxon>Bacillati</taxon>
        <taxon>Bacillota</taxon>
        <taxon>Bacilli</taxon>
        <taxon>Bacillales</taxon>
        <taxon>Staphylococcaceae</taxon>
        <taxon>Staphylococcus</taxon>
    </lineage>
</organism>
<name>BSHC_STACT</name>
<evidence type="ECO:0000255" key="1">
    <source>
        <dbReference type="HAMAP-Rule" id="MF_01867"/>
    </source>
</evidence>